<dbReference type="EMBL" id="CP000270">
    <property type="protein sequence ID" value="ABE32601.1"/>
    <property type="molecule type" value="Genomic_DNA"/>
</dbReference>
<dbReference type="RefSeq" id="WP_007180126.1">
    <property type="nucleotide sequence ID" value="NZ_CP008760.1"/>
</dbReference>
<dbReference type="SMR" id="Q13TI8"/>
<dbReference type="STRING" id="266265.Bxe_A0332"/>
<dbReference type="GeneID" id="97311010"/>
<dbReference type="KEGG" id="bxb:DR64_2502"/>
<dbReference type="KEGG" id="bxe:Bxe_A0332"/>
<dbReference type="eggNOG" id="COG1841">
    <property type="taxonomic scope" value="Bacteria"/>
</dbReference>
<dbReference type="OrthoDB" id="9812790at2"/>
<dbReference type="Proteomes" id="UP000001817">
    <property type="component" value="Chromosome 1"/>
</dbReference>
<dbReference type="GO" id="GO:0022625">
    <property type="term" value="C:cytosolic large ribosomal subunit"/>
    <property type="evidence" value="ECO:0007669"/>
    <property type="project" value="TreeGrafter"/>
</dbReference>
<dbReference type="GO" id="GO:0003735">
    <property type="term" value="F:structural constituent of ribosome"/>
    <property type="evidence" value="ECO:0007669"/>
    <property type="project" value="InterPro"/>
</dbReference>
<dbReference type="GO" id="GO:0006412">
    <property type="term" value="P:translation"/>
    <property type="evidence" value="ECO:0007669"/>
    <property type="project" value="UniProtKB-UniRule"/>
</dbReference>
<dbReference type="CDD" id="cd01658">
    <property type="entry name" value="Ribosomal_L30"/>
    <property type="match status" value="1"/>
</dbReference>
<dbReference type="FunFam" id="3.30.1390.20:FF:000001">
    <property type="entry name" value="50S ribosomal protein L30"/>
    <property type="match status" value="1"/>
</dbReference>
<dbReference type="Gene3D" id="3.30.1390.20">
    <property type="entry name" value="Ribosomal protein L30, ferredoxin-like fold domain"/>
    <property type="match status" value="1"/>
</dbReference>
<dbReference type="HAMAP" id="MF_01371_B">
    <property type="entry name" value="Ribosomal_uL30_B"/>
    <property type="match status" value="1"/>
</dbReference>
<dbReference type="InterPro" id="IPR036919">
    <property type="entry name" value="Ribo_uL30_ferredoxin-like_sf"/>
</dbReference>
<dbReference type="InterPro" id="IPR005996">
    <property type="entry name" value="Ribosomal_uL30_bac-type"/>
</dbReference>
<dbReference type="InterPro" id="IPR016082">
    <property type="entry name" value="Ribosomal_uL30_ferredoxin-like"/>
</dbReference>
<dbReference type="NCBIfam" id="TIGR01308">
    <property type="entry name" value="rpmD_bact"/>
    <property type="match status" value="1"/>
</dbReference>
<dbReference type="PANTHER" id="PTHR15892:SF2">
    <property type="entry name" value="LARGE RIBOSOMAL SUBUNIT PROTEIN UL30M"/>
    <property type="match status" value="1"/>
</dbReference>
<dbReference type="PANTHER" id="PTHR15892">
    <property type="entry name" value="MITOCHONDRIAL RIBOSOMAL PROTEIN L30"/>
    <property type="match status" value="1"/>
</dbReference>
<dbReference type="Pfam" id="PF00327">
    <property type="entry name" value="Ribosomal_L30"/>
    <property type="match status" value="1"/>
</dbReference>
<dbReference type="PIRSF" id="PIRSF002211">
    <property type="entry name" value="Ribosomal_L30_bac-type"/>
    <property type="match status" value="1"/>
</dbReference>
<dbReference type="SUPFAM" id="SSF55129">
    <property type="entry name" value="Ribosomal protein L30p/L7e"/>
    <property type="match status" value="1"/>
</dbReference>
<feature type="chain" id="PRO_0000273763" description="Large ribosomal subunit protein uL30">
    <location>
        <begin position="1"/>
        <end position="60"/>
    </location>
</feature>
<sequence>MSDKTVKVQLVKSLIGTRETHRATVRGLGLRRLNSVSELQDTPAVRGMINKVSYLVKVIS</sequence>
<reference key="1">
    <citation type="journal article" date="2006" name="Proc. Natl. Acad. Sci. U.S.A.">
        <title>Burkholderia xenovorans LB400 harbors a multi-replicon, 9.73-Mbp genome shaped for versatility.</title>
        <authorList>
            <person name="Chain P.S.G."/>
            <person name="Denef V.J."/>
            <person name="Konstantinidis K.T."/>
            <person name="Vergez L.M."/>
            <person name="Agullo L."/>
            <person name="Reyes V.L."/>
            <person name="Hauser L."/>
            <person name="Cordova M."/>
            <person name="Gomez L."/>
            <person name="Gonzalez M."/>
            <person name="Land M."/>
            <person name="Lao V."/>
            <person name="Larimer F."/>
            <person name="LiPuma J.J."/>
            <person name="Mahenthiralingam E."/>
            <person name="Malfatti S.A."/>
            <person name="Marx C.J."/>
            <person name="Parnell J.J."/>
            <person name="Ramette A."/>
            <person name="Richardson P."/>
            <person name="Seeger M."/>
            <person name="Smith D."/>
            <person name="Spilker T."/>
            <person name="Sul W.J."/>
            <person name="Tsoi T.V."/>
            <person name="Ulrich L.E."/>
            <person name="Zhulin I.B."/>
            <person name="Tiedje J.M."/>
        </authorList>
    </citation>
    <scope>NUCLEOTIDE SEQUENCE [LARGE SCALE GENOMIC DNA]</scope>
    <source>
        <strain>LB400</strain>
    </source>
</reference>
<keyword id="KW-1185">Reference proteome</keyword>
<keyword id="KW-0687">Ribonucleoprotein</keyword>
<keyword id="KW-0689">Ribosomal protein</keyword>
<evidence type="ECO:0000255" key="1">
    <source>
        <dbReference type="HAMAP-Rule" id="MF_01371"/>
    </source>
</evidence>
<evidence type="ECO:0000305" key="2"/>
<protein>
    <recommendedName>
        <fullName evidence="1">Large ribosomal subunit protein uL30</fullName>
    </recommendedName>
    <alternativeName>
        <fullName evidence="2">50S ribosomal protein L30</fullName>
    </alternativeName>
</protein>
<gene>
    <name evidence="1" type="primary">rpmD</name>
    <name type="ordered locus">Bxeno_A4063</name>
    <name type="ORF">Bxe_A0332</name>
</gene>
<comment type="subunit">
    <text evidence="1">Part of the 50S ribosomal subunit.</text>
</comment>
<comment type="similarity">
    <text evidence="1">Belongs to the universal ribosomal protein uL30 family.</text>
</comment>
<proteinExistence type="inferred from homology"/>
<name>RL30_PARXL</name>
<accession>Q13TI8</accession>
<organism>
    <name type="scientific">Paraburkholderia xenovorans (strain LB400)</name>
    <dbReference type="NCBI Taxonomy" id="266265"/>
    <lineage>
        <taxon>Bacteria</taxon>
        <taxon>Pseudomonadati</taxon>
        <taxon>Pseudomonadota</taxon>
        <taxon>Betaproteobacteria</taxon>
        <taxon>Burkholderiales</taxon>
        <taxon>Burkholderiaceae</taxon>
        <taxon>Paraburkholderia</taxon>
    </lineage>
</organism>